<comment type="function">
    <text evidence="1">Converts GTP to 7,8-dihydro-D-neopterin 2',3'-cyclic phosphate, the first intermediate in the biosynthesis of coenzyme methanopterin.</text>
</comment>
<comment type="catalytic activity">
    <reaction evidence="1">
        <text>GTP + H2O = 7,8-dihydroneopterin 2',3'-cyclic phosphate + formate + diphosphate + H(+)</text>
        <dbReference type="Rhea" id="RHEA:25860"/>
        <dbReference type="ChEBI" id="CHEBI:15377"/>
        <dbReference type="ChEBI" id="CHEBI:15378"/>
        <dbReference type="ChEBI" id="CHEBI:15740"/>
        <dbReference type="ChEBI" id="CHEBI:33019"/>
        <dbReference type="ChEBI" id="CHEBI:37565"/>
        <dbReference type="ChEBI" id="CHEBI:58854"/>
        <dbReference type="EC" id="3.5.4.39"/>
    </reaction>
</comment>
<comment type="cofactor">
    <cofactor evidence="1">
        <name>Fe(2+)</name>
        <dbReference type="ChEBI" id="CHEBI:29033"/>
    </cofactor>
    <text evidence="1">Binds 1 Fe(2+) ion per subunit.</text>
</comment>
<comment type="pathway">
    <text evidence="1">Cofactor biosynthesis; 5,6,7,8-tetrahydromethanopterin biosynthesis.</text>
</comment>
<comment type="subunit">
    <text evidence="1">Homodimer.</text>
</comment>
<comment type="similarity">
    <text evidence="1">Belongs to the GTP cyclohydrolase IV family.</text>
</comment>
<name>MPTA_META3</name>
<accession>A6UW53</accession>
<protein>
    <recommendedName>
        <fullName evidence="1">GTP cyclohydrolase MptA</fullName>
        <ecNumber evidence="1">3.5.4.39</ecNumber>
    </recommendedName>
    <alternativeName>
        <fullName evidence="1">GTP cyclohydrolase IV</fullName>
    </alternativeName>
</protein>
<dbReference type="EC" id="3.5.4.39" evidence="1"/>
<dbReference type="EMBL" id="CP000743">
    <property type="protein sequence ID" value="ABR56725.1"/>
    <property type="molecule type" value="Genomic_DNA"/>
</dbReference>
<dbReference type="RefSeq" id="WP_011973857.1">
    <property type="nucleotide sequence ID" value="NC_009635.1"/>
</dbReference>
<dbReference type="SMR" id="A6UW53"/>
<dbReference type="STRING" id="419665.Maeo_1148"/>
<dbReference type="GeneID" id="5327356"/>
<dbReference type="GeneID" id="75304597"/>
<dbReference type="KEGG" id="mae:Maeo_1148"/>
<dbReference type="eggNOG" id="arCOG04301">
    <property type="taxonomic scope" value="Archaea"/>
</dbReference>
<dbReference type="HOGENOM" id="CLU_062816_1_0_2"/>
<dbReference type="OrthoDB" id="53087at2157"/>
<dbReference type="UniPathway" id="UPA00065"/>
<dbReference type="Proteomes" id="UP000001106">
    <property type="component" value="Chromosome"/>
</dbReference>
<dbReference type="GO" id="GO:0003934">
    <property type="term" value="F:GTP cyclohydrolase I activity"/>
    <property type="evidence" value="ECO:0007669"/>
    <property type="project" value="InterPro"/>
</dbReference>
<dbReference type="GO" id="GO:0044682">
    <property type="term" value="F:GTP cyclohydrolase IV activity"/>
    <property type="evidence" value="ECO:0007669"/>
    <property type="project" value="UniProtKB-UniRule"/>
</dbReference>
<dbReference type="GO" id="GO:0005506">
    <property type="term" value="F:iron ion binding"/>
    <property type="evidence" value="ECO:0007669"/>
    <property type="project" value="UniProtKB-UniRule"/>
</dbReference>
<dbReference type="GO" id="GO:2001118">
    <property type="term" value="P:tetrahydromethanopterin biosynthetic process"/>
    <property type="evidence" value="ECO:0007669"/>
    <property type="project" value="UniProtKB-UniRule"/>
</dbReference>
<dbReference type="Gene3D" id="3.10.270.10">
    <property type="entry name" value="Urate Oxidase"/>
    <property type="match status" value="1"/>
</dbReference>
<dbReference type="HAMAP" id="MF_01527_A">
    <property type="entry name" value="GTP_cyclohydrol_A"/>
    <property type="match status" value="1"/>
</dbReference>
<dbReference type="InterPro" id="IPR003801">
    <property type="entry name" value="GTP_cyclohydrolase_FolE2/MptA"/>
</dbReference>
<dbReference type="InterPro" id="IPR022840">
    <property type="entry name" value="GTP_cyclohydrolase_MptA"/>
</dbReference>
<dbReference type="NCBIfam" id="TIGR00294">
    <property type="entry name" value="GTP cyclohydrolase MptA"/>
    <property type="match status" value="1"/>
</dbReference>
<dbReference type="PANTHER" id="PTHR36445">
    <property type="entry name" value="GTP CYCLOHYDROLASE MPTA"/>
    <property type="match status" value="1"/>
</dbReference>
<dbReference type="PANTHER" id="PTHR36445:SF1">
    <property type="entry name" value="GTP CYCLOHYDROLASE MPTA"/>
    <property type="match status" value="1"/>
</dbReference>
<dbReference type="Pfam" id="PF02649">
    <property type="entry name" value="GCHY-1"/>
    <property type="match status" value="1"/>
</dbReference>
<proteinExistence type="inferred from homology"/>
<keyword id="KW-0378">Hydrolase</keyword>
<keyword id="KW-0408">Iron</keyword>
<keyword id="KW-0479">Metal-binding</keyword>
<sequence>MFCDVQATEPDVKVSLTRVGITNLKKLIKITRESKRPIILLPTFEVFVDLPSSQKGIHMSRSPEVIEEIIESMVDNEVYGIEELSVDIIKKLFEKHEYATRAEVLMYGEYMMEEESPITKRSSQEICKIMSKAHGTKDGNNNIIIKKMVGAEVVGITACPCAQNLLKEKAIKKLKEKGFSDEDIKNILDSVSIATHNQRGIGTIMIEVPDGYEVGISKIINIIKKSMSGEVYELLKRVDEGYVVEEAHKNPKFVEDCAREMIRRVVGEFNYLPDDTEVLVRQVNKESIHRHDAFAERSSTLGELRNELK</sequence>
<reference key="1">
    <citation type="submission" date="2007-06" db="EMBL/GenBank/DDBJ databases">
        <title>Complete sequence of Methanococcus aeolicus Nankai-3.</title>
        <authorList>
            <consortium name="US DOE Joint Genome Institute"/>
            <person name="Copeland A."/>
            <person name="Lucas S."/>
            <person name="Lapidus A."/>
            <person name="Barry K."/>
            <person name="Glavina del Rio T."/>
            <person name="Dalin E."/>
            <person name="Tice H."/>
            <person name="Pitluck S."/>
            <person name="Chain P."/>
            <person name="Malfatti S."/>
            <person name="Shin M."/>
            <person name="Vergez L."/>
            <person name="Schmutz J."/>
            <person name="Larimer F."/>
            <person name="Land M."/>
            <person name="Hauser L."/>
            <person name="Kyrpides N."/>
            <person name="Lykidis A."/>
            <person name="Sieprawska-Lupa M."/>
            <person name="Whitman W.B."/>
            <person name="Richardson P."/>
        </authorList>
    </citation>
    <scope>NUCLEOTIDE SEQUENCE [LARGE SCALE GENOMIC DNA]</scope>
    <source>
        <strain>ATCC BAA-1280 / DSM 17508 / OCM 812 / Nankai-3</strain>
    </source>
</reference>
<gene>
    <name evidence="1" type="primary">mptA</name>
    <name type="ordered locus">Maeo_1148</name>
</gene>
<feature type="chain" id="PRO_1000068665" description="GTP cyclohydrolase MptA">
    <location>
        <begin position="1"/>
        <end position="309"/>
    </location>
</feature>
<feature type="site" description="May be catalytically important" evidence="1">
    <location>
        <position position="159"/>
    </location>
</feature>
<evidence type="ECO:0000255" key="1">
    <source>
        <dbReference type="HAMAP-Rule" id="MF_01527"/>
    </source>
</evidence>
<organism>
    <name type="scientific">Methanococcus aeolicus (strain ATCC BAA-1280 / DSM 17508 / OCM 812 / Nankai-3)</name>
    <dbReference type="NCBI Taxonomy" id="419665"/>
    <lineage>
        <taxon>Archaea</taxon>
        <taxon>Methanobacteriati</taxon>
        <taxon>Methanobacteriota</taxon>
        <taxon>Methanomada group</taxon>
        <taxon>Methanococci</taxon>
        <taxon>Methanococcales</taxon>
        <taxon>Methanococcaceae</taxon>
        <taxon>Methanococcus</taxon>
    </lineage>
</organism>